<accession>Q031P9</accession>
<reference key="1">
    <citation type="journal article" date="2006" name="Proc. Natl. Acad. Sci. U.S.A.">
        <title>Comparative genomics of the lactic acid bacteria.</title>
        <authorList>
            <person name="Makarova K.S."/>
            <person name="Slesarev A."/>
            <person name="Wolf Y.I."/>
            <person name="Sorokin A."/>
            <person name="Mirkin B."/>
            <person name="Koonin E.V."/>
            <person name="Pavlov A."/>
            <person name="Pavlova N."/>
            <person name="Karamychev V."/>
            <person name="Polouchine N."/>
            <person name="Shakhova V."/>
            <person name="Grigoriev I."/>
            <person name="Lou Y."/>
            <person name="Rohksar D."/>
            <person name="Lucas S."/>
            <person name="Huang K."/>
            <person name="Goodstein D.M."/>
            <person name="Hawkins T."/>
            <person name="Plengvidhya V."/>
            <person name="Welker D."/>
            <person name="Hughes J."/>
            <person name="Goh Y."/>
            <person name="Benson A."/>
            <person name="Baldwin K."/>
            <person name="Lee J.-H."/>
            <person name="Diaz-Muniz I."/>
            <person name="Dosti B."/>
            <person name="Smeianov V."/>
            <person name="Wechter W."/>
            <person name="Barabote R."/>
            <person name="Lorca G."/>
            <person name="Altermann E."/>
            <person name="Barrangou R."/>
            <person name="Ganesan B."/>
            <person name="Xie Y."/>
            <person name="Rawsthorne H."/>
            <person name="Tamir D."/>
            <person name="Parker C."/>
            <person name="Breidt F."/>
            <person name="Broadbent J.R."/>
            <person name="Hutkins R."/>
            <person name="O'Sullivan D."/>
            <person name="Steele J."/>
            <person name="Unlu G."/>
            <person name="Saier M.H. Jr."/>
            <person name="Klaenhammer T."/>
            <person name="Richardson P."/>
            <person name="Kozyavkin S."/>
            <person name="Weimer B.C."/>
            <person name="Mills D.A."/>
        </authorList>
    </citation>
    <scope>NUCLEOTIDE SEQUENCE [LARGE SCALE GENOMIC DNA]</scope>
    <source>
        <strain>SK11</strain>
    </source>
</reference>
<dbReference type="EC" id="6.5.1.2" evidence="1"/>
<dbReference type="EMBL" id="CP000425">
    <property type="protein sequence ID" value="ABJ72073.1"/>
    <property type="molecule type" value="Genomic_DNA"/>
</dbReference>
<dbReference type="RefSeq" id="WP_011675493.1">
    <property type="nucleotide sequence ID" value="NC_008527.1"/>
</dbReference>
<dbReference type="SMR" id="Q031P9"/>
<dbReference type="KEGG" id="llc:LACR_0472"/>
<dbReference type="HOGENOM" id="CLU_007764_2_1_9"/>
<dbReference type="Proteomes" id="UP000000240">
    <property type="component" value="Chromosome"/>
</dbReference>
<dbReference type="GO" id="GO:0005829">
    <property type="term" value="C:cytosol"/>
    <property type="evidence" value="ECO:0007669"/>
    <property type="project" value="TreeGrafter"/>
</dbReference>
<dbReference type="GO" id="GO:0003911">
    <property type="term" value="F:DNA ligase (NAD+) activity"/>
    <property type="evidence" value="ECO:0007669"/>
    <property type="project" value="UniProtKB-UniRule"/>
</dbReference>
<dbReference type="GO" id="GO:0046872">
    <property type="term" value="F:metal ion binding"/>
    <property type="evidence" value="ECO:0007669"/>
    <property type="project" value="UniProtKB-KW"/>
</dbReference>
<dbReference type="GO" id="GO:0006281">
    <property type="term" value="P:DNA repair"/>
    <property type="evidence" value="ECO:0007669"/>
    <property type="project" value="UniProtKB-KW"/>
</dbReference>
<dbReference type="GO" id="GO:0006260">
    <property type="term" value="P:DNA replication"/>
    <property type="evidence" value="ECO:0007669"/>
    <property type="project" value="UniProtKB-KW"/>
</dbReference>
<dbReference type="CDD" id="cd17748">
    <property type="entry name" value="BRCT_DNA_ligase_like"/>
    <property type="match status" value="1"/>
</dbReference>
<dbReference type="CDD" id="cd00114">
    <property type="entry name" value="LIGANc"/>
    <property type="match status" value="1"/>
</dbReference>
<dbReference type="FunFam" id="1.10.150.20:FF:000007">
    <property type="entry name" value="DNA ligase"/>
    <property type="match status" value="1"/>
</dbReference>
<dbReference type="FunFam" id="2.40.50.140:FF:000012">
    <property type="entry name" value="DNA ligase"/>
    <property type="match status" value="1"/>
</dbReference>
<dbReference type="FunFam" id="3.30.470.30:FF:000001">
    <property type="entry name" value="DNA ligase"/>
    <property type="match status" value="1"/>
</dbReference>
<dbReference type="Gene3D" id="6.20.10.30">
    <property type="match status" value="1"/>
</dbReference>
<dbReference type="Gene3D" id="1.10.150.20">
    <property type="entry name" value="5' to 3' exonuclease, C-terminal subdomain"/>
    <property type="match status" value="2"/>
</dbReference>
<dbReference type="Gene3D" id="3.40.50.10190">
    <property type="entry name" value="BRCT domain"/>
    <property type="match status" value="1"/>
</dbReference>
<dbReference type="Gene3D" id="3.30.470.30">
    <property type="entry name" value="DNA ligase/mRNA capping enzyme"/>
    <property type="match status" value="1"/>
</dbReference>
<dbReference type="Gene3D" id="1.10.287.610">
    <property type="entry name" value="Helix hairpin bin"/>
    <property type="match status" value="1"/>
</dbReference>
<dbReference type="Gene3D" id="2.40.50.140">
    <property type="entry name" value="Nucleic acid-binding proteins"/>
    <property type="match status" value="1"/>
</dbReference>
<dbReference type="HAMAP" id="MF_01588">
    <property type="entry name" value="DNA_ligase_A"/>
    <property type="match status" value="1"/>
</dbReference>
<dbReference type="InterPro" id="IPR001357">
    <property type="entry name" value="BRCT_dom"/>
</dbReference>
<dbReference type="InterPro" id="IPR036420">
    <property type="entry name" value="BRCT_dom_sf"/>
</dbReference>
<dbReference type="InterPro" id="IPR041663">
    <property type="entry name" value="DisA/LigA_HHH"/>
</dbReference>
<dbReference type="InterPro" id="IPR001679">
    <property type="entry name" value="DNA_ligase"/>
</dbReference>
<dbReference type="InterPro" id="IPR018239">
    <property type="entry name" value="DNA_ligase_AS"/>
</dbReference>
<dbReference type="InterPro" id="IPR033136">
    <property type="entry name" value="DNA_ligase_CS"/>
</dbReference>
<dbReference type="InterPro" id="IPR013839">
    <property type="entry name" value="DNAligase_adenylation"/>
</dbReference>
<dbReference type="InterPro" id="IPR013840">
    <property type="entry name" value="DNAligase_N"/>
</dbReference>
<dbReference type="InterPro" id="IPR012340">
    <property type="entry name" value="NA-bd_OB-fold"/>
</dbReference>
<dbReference type="InterPro" id="IPR004150">
    <property type="entry name" value="NAD_DNA_ligase_OB"/>
</dbReference>
<dbReference type="InterPro" id="IPR010994">
    <property type="entry name" value="RuvA_2-like"/>
</dbReference>
<dbReference type="InterPro" id="IPR004149">
    <property type="entry name" value="Znf_DNAligase_C4"/>
</dbReference>
<dbReference type="NCBIfam" id="TIGR00575">
    <property type="entry name" value="dnlj"/>
    <property type="match status" value="1"/>
</dbReference>
<dbReference type="NCBIfam" id="NF005932">
    <property type="entry name" value="PRK07956.1"/>
    <property type="match status" value="1"/>
</dbReference>
<dbReference type="PANTHER" id="PTHR23389">
    <property type="entry name" value="CHROMOSOME TRANSMISSION FIDELITY FACTOR 18"/>
    <property type="match status" value="1"/>
</dbReference>
<dbReference type="PANTHER" id="PTHR23389:SF9">
    <property type="entry name" value="DNA LIGASE"/>
    <property type="match status" value="1"/>
</dbReference>
<dbReference type="Pfam" id="PF00533">
    <property type="entry name" value="BRCT"/>
    <property type="match status" value="1"/>
</dbReference>
<dbReference type="Pfam" id="PF01653">
    <property type="entry name" value="DNA_ligase_aden"/>
    <property type="match status" value="1"/>
</dbReference>
<dbReference type="Pfam" id="PF03120">
    <property type="entry name" value="DNA_ligase_OB"/>
    <property type="match status" value="1"/>
</dbReference>
<dbReference type="Pfam" id="PF03119">
    <property type="entry name" value="DNA_ligase_ZBD"/>
    <property type="match status" value="1"/>
</dbReference>
<dbReference type="Pfam" id="PF12826">
    <property type="entry name" value="HHH_2"/>
    <property type="match status" value="1"/>
</dbReference>
<dbReference type="Pfam" id="PF14520">
    <property type="entry name" value="HHH_5"/>
    <property type="match status" value="1"/>
</dbReference>
<dbReference type="Pfam" id="PF22745">
    <property type="entry name" value="Nlig-Ia"/>
    <property type="match status" value="1"/>
</dbReference>
<dbReference type="PIRSF" id="PIRSF001604">
    <property type="entry name" value="LigA"/>
    <property type="match status" value="1"/>
</dbReference>
<dbReference type="SMART" id="SM00292">
    <property type="entry name" value="BRCT"/>
    <property type="match status" value="1"/>
</dbReference>
<dbReference type="SMART" id="SM00532">
    <property type="entry name" value="LIGANc"/>
    <property type="match status" value="1"/>
</dbReference>
<dbReference type="SUPFAM" id="SSF52113">
    <property type="entry name" value="BRCT domain"/>
    <property type="match status" value="1"/>
</dbReference>
<dbReference type="SUPFAM" id="SSF56091">
    <property type="entry name" value="DNA ligase/mRNA capping enzyme, catalytic domain"/>
    <property type="match status" value="1"/>
</dbReference>
<dbReference type="SUPFAM" id="SSF50249">
    <property type="entry name" value="Nucleic acid-binding proteins"/>
    <property type="match status" value="1"/>
</dbReference>
<dbReference type="SUPFAM" id="SSF47781">
    <property type="entry name" value="RuvA domain 2-like"/>
    <property type="match status" value="1"/>
</dbReference>
<dbReference type="PROSITE" id="PS50172">
    <property type="entry name" value="BRCT"/>
    <property type="match status" value="1"/>
</dbReference>
<dbReference type="PROSITE" id="PS01055">
    <property type="entry name" value="DNA_LIGASE_N1"/>
    <property type="match status" value="1"/>
</dbReference>
<dbReference type="PROSITE" id="PS01056">
    <property type="entry name" value="DNA_LIGASE_N2"/>
    <property type="match status" value="1"/>
</dbReference>
<comment type="function">
    <text evidence="1">DNA ligase that catalyzes the formation of phosphodiester linkages between 5'-phosphoryl and 3'-hydroxyl groups in double-stranded DNA using NAD as a coenzyme and as the energy source for the reaction. It is essential for DNA replication and repair of damaged DNA.</text>
</comment>
<comment type="catalytic activity">
    <reaction evidence="1">
        <text>NAD(+) + (deoxyribonucleotide)n-3'-hydroxyl + 5'-phospho-(deoxyribonucleotide)m = (deoxyribonucleotide)n+m + AMP + beta-nicotinamide D-nucleotide.</text>
        <dbReference type="EC" id="6.5.1.2"/>
    </reaction>
</comment>
<comment type="cofactor">
    <cofactor evidence="1">
        <name>Mg(2+)</name>
        <dbReference type="ChEBI" id="CHEBI:18420"/>
    </cofactor>
    <cofactor evidence="1">
        <name>Mn(2+)</name>
        <dbReference type="ChEBI" id="CHEBI:29035"/>
    </cofactor>
</comment>
<comment type="similarity">
    <text evidence="1">Belongs to the NAD-dependent DNA ligase family. LigA subfamily.</text>
</comment>
<sequence length="686" mass="76825">MNIESKIKEFTDQLNQFAYEYYTLDEPSVEDSEYDRLYHELVKLEQENPQLVRADSPTHWTGGVILDGFVKFRHPYNLYSLGDVFSREELALWEERVRKEIVNPEYICELKIDGLSLSLYYENGLLVTAATRGDGTTGENITENVKRIKDVPLKLKEAIDIVVRGEAYLPRQNFAKLNAERELAGAAPFANPRNAAAGTLRQLDTKIVAKRGLATFLYQEASPATNDTQEEVLEYFEELGFQVNPERKFARNLDEIWEFIEEATRLRDELPYDIDGVVIKVNNLAEQEELGFTVKAPRWAIAYKFPAEQAETEILSVDWTVGRTGVVTPTANMTPVLLAQTTVARATLHNVDYIQEKDIRNHDKVMIYKAGDIIPKVGKVLLEKRKPAKHLRKTHRANKYVWTRFGRRSVEKGLVFSKREDNRVKIPTQCPECDSDLIHFEDEVALRCVNPLCPAQIREKLIHFASRDAMNIVGLGPSVISQLFDKKLVTDVADLYQLTVEDLLTLDKVKETLAQKIVSAIAQSRENSAEKLLFGLGIRHVGGKAAKLLLERFANLRALSQASEEEISEIPSLGGVIATAVVSYFETAGAKTLLDELENAGLNFAYLGAVNVEGILSGKTVVLTGKLTTLKRKEAKEKLEALGANVSGSVSKKTDLVVAGEEAGSKLTKAQDLGIEIWSEQDLLDL</sequence>
<proteinExistence type="inferred from homology"/>
<evidence type="ECO:0000255" key="1">
    <source>
        <dbReference type="HAMAP-Rule" id="MF_01588"/>
    </source>
</evidence>
<gene>
    <name evidence="1" type="primary">ligA</name>
    <name type="ordered locus">LACR_0472</name>
</gene>
<name>DNLJ_LACLS</name>
<keyword id="KW-0227">DNA damage</keyword>
<keyword id="KW-0234">DNA repair</keyword>
<keyword id="KW-0235">DNA replication</keyword>
<keyword id="KW-0436">Ligase</keyword>
<keyword id="KW-0460">Magnesium</keyword>
<keyword id="KW-0464">Manganese</keyword>
<keyword id="KW-0479">Metal-binding</keyword>
<keyword id="KW-0520">NAD</keyword>
<keyword id="KW-0862">Zinc</keyword>
<feature type="chain" id="PRO_0000313282" description="DNA ligase">
    <location>
        <begin position="1"/>
        <end position="686"/>
    </location>
</feature>
<feature type="domain" description="BRCT" evidence="1">
    <location>
        <begin position="611"/>
        <end position="686"/>
    </location>
</feature>
<feature type="active site" description="N6-AMP-lysine intermediate" evidence="1">
    <location>
        <position position="111"/>
    </location>
</feature>
<feature type="binding site" evidence="1">
    <location>
        <begin position="31"/>
        <end position="35"/>
    </location>
    <ligand>
        <name>NAD(+)</name>
        <dbReference type="ChEBI" id="CHEBI:57540"/>
    </ligand>
</feature>
<feature type="binding site" evidence="1">
    <location>
        <begin position="80"/>
        <end position="81"/>
    </location>
    <ligand>
        <name>NAD(+)</name>
        <dbReference type="ChEBI" id="CHEBI:57540"/>
    </ligand>
</feature>
<feature type="binding site" evidence="1">
    <location>
        <position position="109"/>
    </location>
    <ligand>
        <name>NAD(+)</name>
        <dbReference type="ChEBI" id="CHEBI:57540"/>
    </ligand>
</feature>
<feature type="binding site" evidence="1">
    <location>
        <position position="132"/>
    </location>
    <ligand>
        <name>NAD(+)</name>
        <dbReference type="ChEBI" id="CHEBI:57540"/>
    </ligand>
</feature>
<feature type="binding site" evidence="1">
    <location>
        <position position="166"/>
    </location>
    <ligand>
        <name>NAD(+)</name>
        <dbReference type="ChEBI" id="CHEBI:57540"/>
    </ligand>
</feature>
<feature type="binding site" evidence="1">
    <location>
        <position position="280"/>
    </location>
    <ligand>
        <name>NAD(+)</name>
        <dbReference type="ChEBI" id="CHEBI:57540"/>
    </ligand>
</feature>
<feature type="binding site" evidence="1">
    <location>
        <position position="304"/>
    </location>
    <ligand>
        <name>NAD(+)</name>
        <dbReference type="ChEBI" id="CHEBI:57540"/>
    </ligand>
</feature>
<feature type="binding site" evidence="1">
    <location>
        <position position="430"/>
    </location>
    <ligand>
        <name>Zn(2+)</name>
        <dbReference type="ChEBI" id="CHEBI:29105"/>
    </ligand>
</feature>
<feature type="binding site" evidence="1">
    <location>
        <position position="433"/>
    </location>
    <ligand>
        <name>Zn(2+)</name>
        <dbReference type="ChEBI" id="CHEBI:29105"/>
    </ligand>
</feature>
<feature type="binding site" evidence="1">
    <location>
        <position position="448"/>
    </location>
    <ligand>
        <name>Zn(2+)</name>
        <dbReference type="ChEBI" id="CHEBI:29105"/>
    </ligand>
</feature>
<feature type="binding site" evidence="1">
    <location>
        <position position="453"/>
    </location>
    <ligand>
        <name>Zn(2+)</name>
        <dbReference type="ChEBI" id="CHEBI:29105"/>
    </ligand>
</feature>
<organism>
    <name type="scientific">Lactococcus lactis subsp. cremoris (strain SK11)</name>
    <dbReference type="NCBI Taxonomy" id="272622"/>
    <lineage>
        <taxon>Bacteria</taxon>
        <taxon>Bacillati</taxon>
        <taxon>Bacillota</taxon>
        <taxon>Bacilli</taxon>
        <taxon>Lactobacillales</taxon>
        <taxon>Streptococcaceae</taxon>
        <taxon>Lactococcus</taxon>
        <taxon>Lactococcus cremoris subsp. cremoris</taxon>
    </lineage>
</organism>
<protein>
    <recommendedName>
        <fullName evidence="1">DNA ligase</fullName>
        <ecNumber evidence="1">6.5.1.2</ecNumber>
    </recommendedName>
    <alternativeName>
        <fullName evidence="1">Polydeoxyribonucleotide synthase [NAD(+)]</fullName>
    </alternativeName>
</protein>